<dbReference type="EC" id="1.1.1.23" evidence="1"/>
<dbReference type="EMBL" id="AE017180">
    <property type="protein sequence ID" value="AAR36491.1"/>
    <property type="molecule type" value="Genomic_DNA"/>
</dbReference>
<dbReference type="RefSeq" id="NP_954141.1">
    <property type="nucleotide sequence ID" value="NC_002939.5"/>
</dbReference>
<dbReference type="RefSeq" id="WP_010943721.1">
    <property type="nucleotide sequence ID" value="NC_002939.5"/>
</dbReference>
<dbReference type="SMR" id="P60859"/>
<dbReference type="FunCoup" id="P60859">
    <property type="interactions" value="579"/>
</dbReference>
<dbReference type="STRING" id="243231.GSU3100"/>
<dbReference type="EnsemblBacteria" id="AAR36491">
    <property type="protein sequence ID" value="AAR36491"/>
    <property type="gene ID" value="GSU3100"/>
</dbReference>
<dbReference type="KEGG" id="gsu:GSU3100"/>
<dbReference type="PATRIC" id="fig|243231.5.peg.3124"/>
<dbReference type="eggNOG" id="COG0141">
    <property type="taxonomic scope" value="Bacteria"/>
</dbReference>
<dbReference type="HOGENOM" id="CLU_006732_3_3_7"/>
<dbReference type="InParanoid" id="P60859"/>
<dbReference type="OrthoDB" id="9805269at2"/>
<dbReference type="UniPathway" id="UPA00031">
    <property type="reaction ID" value="UER00014"/>
</dbReference>
<dbReference type="Proteomes" id="UP000000577">
    <property type="component" value="Chromosome"/>
</dbReference>
<dbReference type="GO" id="GO:0005737">
    <property type="term" value="C:cytoplasm"/>
    <property type="evidence" value="ECO:0000318"/>
    <property type="project" value="GO_Central"/>
</dbReference>
<dbReference type="GO" id="GO:0005829">
    <property type="term" value="C:cytosol"/>
    <property type="evidence" value="ECO:0000318"/>
    <property type="project" value="GO_Central"/>
</dbReference>
<dbReference type="GO" id="GO:0004399">
    <property type="term" value="F:histidinol dehydrogenase activity"/>
    <property type="evidence" value="ECO:0000318"/>
    <property type="project" value="GO_Central"/>
</dbReference>
<dbReference type="GO" id="GO:0051287">
    <property type="term" value="F:NAD binding"/>
    <property type="evidence" value="ECO:0007669"/>
    <property type="project" value="InterPro"/>
</dbReference>
<dbReference type="GO" id="GO:0008270">
    <property type="term" value="F:zinc ion binding"/>
    <property type="evidence" value="ECO:0007669"/>
    <property type="project" value="UniProtKB-UniRule"/>
</dbReference>
<dbReference type="GO" id="GO:0000105">
    <property type="term" value="P:L-histidine biosynthetic process"/>
    <property type="evidence" value="ECO:0000318"/>
    <property type="project" value="GO_Central"/>
</dbReference>
<dbReference type="CDD" id="cd06572">
    <property type="entry name" value="Histidinol_dh"/>
    <property type="match status" value="1"/>
</dbReference>
<dbReference type="FunFam" id="3.40.50.1980:FF:000001">
    <property type="entry name" value="Histidinol dehydrogenase"/>
    <property type="match status" value="1"/>
</dbReference>
<dbReference type="FunFam" id="3.40.50.1980:FF:000026">
    <property type="entry name" value="Histidinol dehydrogenase"/>
    <property type="match status" value="1"/>
</dbReference>
<dbReference type="Gene3D" id="1.20.5.1300">
    <property type="match status" value="1"/>
</dbReference>
<dbReference type="Gene3D" id="3.40.50.1980">
    <property type="entry name" value="Nitrogenase molybdenum iron protein domain"/>
    <property type="match status" value="2"/>
</dbReference>
<dbReference type="HAMAP" id="MF_01024">
    <property type="entry name" value="HisD"/>
    <property type="match status" value="1"/>
</dbReference>
<dbReference type="InterPro" id="IPR016161">
    <property type="entry name" value="Ald_DH/histidinol_DH"/>
</dbReference>
<dbReference type="InterPro" id="IPR001692">
    <property type="entry name" value="Histidinol_DH_CS"/>
</dbReference>
<dbReference type="InterPro" id="IPR022695">
    <property type="entry name" value="Histidinol_DH_monofunct"/>
</dbReference>
<dbReference type="InterPro" id="IPR012131">
    <property type="entry name" value="Hstdl_DH"/>
</dbReference>
<dbReference type="NCBIfam" id="TIGR00069">
    <property type="entry name" value="hisD"/>
    <property type="match status" value="1"/>
</dbReference>
<dbReference type="PANTHER" id="PTHR21256:SF2">
    <property type="entry name" value="HISTIDINE BIOSYNTHESIS TRIFUNCTIONAL PROTEIN"/>
    <property type="match status" value="1"/>
</dbReference>
<dbReference type="PANTHER" id="PTHR21256">
    <property type="entry name" value="HISTIDINOL DEHYDROGENASE HDH"/>
    <property type="match status" value="1"/>
</dbReference>
<dbReference type="Pfam" id="PF00815">
    <property type="entry name" value="Histidinol_dh"/>
    <property type="match status" value="1"/>
</dbReference>
<dbReference type="PIRSF" id="PIRSF000099">
    <property type="entry name" value="Histidinol_dh"/>
    <property type="match status" value="1"/>
</dbReference>
<dbReference type="PRINTS" id="PR00083">
    <property type="entry name" value="HOLDHDRGNASE"/>
</dbReference>
<dbReference type="SUPFAM" id="SSF53720">
    <property type="entry name" value="ALDH-like"/>
    <property type="match status" value="1"/>
</dbReference>
<dbReference type="PROSITE" id="PS00611">
    <property type="entry name" value="HISOL_DEHYDROGENASE"/>
    <property type="match status" value="1"/>
</dbReference>
<feature type="chain" id="PRO_0000135774" description="Histidinol dehydrogenase">
    <location>
        <begin position="1"/>
        <end position="429"/>
    </location>
</feature>
<feature type="active site" description="Proton acceptor" evidence="1">
    <location>
        <position position="327"/>
    </location>
</feature>
<feature type="active site" description="Proton acceptor" evidence="1">
    <location>
        <position position="328"/>
    </location>
</feature>
<feature type="binding site" evidence="1">
    <location>
        <position position="130"/>
    </location>
    <ligand>
        <name>NAD(+)</name>
        <dbReference type="ChEBI" id="CHEBI:57540"/>
    </ligand>
</feature>
<feature type="binding site" evidence="1">
    <location>
        <position position="191"/>
    </location>
    <ligand>
        <name>NAD(+)</name>
        <dbReference type="ChEBI" id="CHEBI:57540"/>
    </ligand>
</feature>
<feature type="binding site" evidence="1">
    <location>
        <position position="214"/>
    </location>
    <ligand>
        <name>NAD(+)</name>
        <dbReference type="ChEBI" id="CHEBI:57540"/>
    </ligand>
</feature>
<feature type="binding site" evidence="1">
    <location>
        <position position="237"/>
    </location>
    <ligand>
        <name>substrate</name>
    </ligand>
</feature>
<feature type="binding site" evidence="1">
    <location>
        <position position="259"/>
    </location>
    <ligand>
        <name>substrate</name>
    </ligand>
</feature>
<feature type="binding site" evidence="1">
    <location>
        <position position="259"/>
    </location>
    <ligand>
        <name>Zn(2+)</name>
        <dbReference type="ChEBI" id="CHEBI:29105"/>
    </ligand>
</feature>
<feature type="binding site" evidence="1">
    <location>
        <position position="262"/>
    </location>
    <ligand>
        <name>substrate</name>
    </ligand>
</feature>
<feature type="binding site" evidence="1">
    <location>
        <position position="262"/>
    </location>
    <ligand>
        <name>Zn(2+)</name>
        <dbReference type="ChEBI" id="CHEBI:29105"/>
    </ligand>
</feature>
<feature type="binding site" evidence="1">
    <location>
        <position position="328"/>
    </location>
    <ligand>
        <name>substrate</name>
    </ligand>
</feature>
<feature type="binding site" evidence="1">
    <location>
        <position position="361"/>
    </location>
    <ligand>
        <name>substrate</name>
    </ligand>
</feature>
<feature type="binding site" evidence="1">
    <location>
        <position position="361"/>
    </location>
    <ligand>
        <name>Zn(2+)</name>
        <dbReference type="ChEBI" id="CHEBI:29105"/>
    </ligand>
</feature>
<feature type="binding site" evidence="1">
    <location>
        <position position="415"/>
    </location>
    <ligand>
        <name>substrate</name>
    </ligand>
</feature>
<feature type="binding site" evidence="1">
    <location>
        <position position="420"/>
    </location>
    <ligand>
        <name>substrate</name>
    </ligand>
</feature>
<feature type="binding site" evidence="1">
    <location>
        <position position="420"/>
    </location>
    <ligand>
        <name>Zn(2+)</name>
        <dbReference type="ChEBI" id="CHEBI:29105"/>
    </ligand>
</feature>
<sequence length="429" mass="46103">MRFLDIRDTNFDAEFAAILARGEETGREVEQVVLDIIADVRARGDEALLEYTRRFDRLEADSVAALQVTEDEIEYAFAKVKDEEIAALKLAVERVARFHEKQKQETWLSTTEPDILLGQMVTPLERVGIYVPGGKASYPSSVIMNAVPARVAGVGEIVMVAPTPGGEINPHVLVAARLSGVDRIFRMGGAQAVAALAYGTATVPRVDKITGPGNIYVATAKKLVFGQVGIDMIAGPSEILVINDGSGTPAHIAADLLSQAEHDELASSILITTDRGFGEQVATEVERQLAQLSRETIARTSWETYGAVIVAGSLDEAIAFSNRIAPEHLELAVANPFEILPRIKNAGAIFLGHFTPEAAGDYLAGPNHTLPTGGTARFFSPLSVDDFVKKSSIVYFSAAGLNRLGRDIVSIAEMEGLEAHGRSVSIRLK</sequence>
<reference key="1">
    <citation type="journal article" date="2003" name="Science">
        <title>Genome of Geobacter sulfurreducens: metal reduction in subsurface environments.</title>
        <authorList>
            <person name="Methe B.A."/>
            <person name="Nelson K.E."/>
            <person name="Eisen J.A."/>
            <person name="Paulsen I.T."/>
            <person name="Nelson W.C."/>
            <person name="Heidelberg J.F."/>
            <person name="Wu D."/>
            <person name="Wu M."/>
            <person name="Ward N.L."/>
            <person name="Beanan M.J."/>
            <person name="Dodson R.J."/>
            <person name="Madupu R."/>
            <person name="Brinkac L.M."/>
            <person name="Daugherty S.C."/>
            <person name="DeBoy R.T."/>
            <person name="Durkin A.S."/>
            <person name="Gwinn M.L."/>
            <person name="Kolonay J.F."/>
            <person name="Sullivan S.A."/>
            <person name="Haft D.H."/>
            <person name="Selengut J."/>
            <person name="Davidsen T.M."/>
            <person name="Zafar N."/>
            <person name="White O."/>
            <person name="Tran B."/>
            <person name="Romero C."/>
            <person name="Forberger H.A."/>
            <person name="Weidman J.F."/>
            <person name="Khouri H.M."/>
            <person name="Feldblyum T.V."/>
            <person name="Utterback T.R."/>
            <person name="Van Aken S.E."/>
            <person name="Lovley D.R."/>
            <person name="Fraser C.M."/>
        </authorList>
    </citation>
    <scope>NUCLEOTIDE SEQUENCE [LARGE SCALE GENOMIC DNA]</scope>
    <source>
        <strain>ATCC 51573 / DSM 12127 / PCA</strain>
    </source>
</reference>
<protein>
    <recommendedName>
        <fullName evidence="1">Histidinol dehydrogenase</fullName>
        <shortName evidence="1">HDH</shortName>
        <ecNumber evidence="1">1.1.1.23</ecNumber>
    </recommendedName>
</protein>
<evidence type="ECO:0000255" key="1">
    <source>
        <dbReference type="HAMAP-Rule" id="MF_01024"/>
    </source>
</evidence>
<name>HISX_GEOSL</name>
<keyword id="KW-0028">Amino-acid biosynthesis</keyword>
<keyword id="KW-0368">Histidine biosynthesis</keyword>
<keyword id="KW-0479">Metal-binding</keyword>
<keyword id="KW-0520">NAD</keyword>
<keyword id="KW-0560">Oxidoreductase</keyword>
<keyword id="KW-1185">Reference proteome</keyword>
<keyword id="KW-0862">Zinc</keyword>
<comment type="function">
    <text evidence="1">Catalyzes the sequential NAD-dependent oxidations of L-histidinol to L-histidinaldehyde and then to L-histidine.</text>
</comment>
<comment type="catalytic activity">
    <reaction evidence="1">
        <text>L-histidinol + 2 NAD(+) + H2O = L-histidine + 2 NADH + 3 H(+)</text>
        <dbReference type="Rhea" id="RHEA:20641"/>
        <dbReference type="ChEBI" id="CHEBI:15377"/>
        <dbReference type="ChEBI" id="CHEBI:15378"/>
        <dbReference type="ChEBI" id="CHEBI:57540"/>
        <dbReference type="ChEBI" id="CHEBI:57595"/>
        <dbReference type="ChEBI" id="CHEBI:57699"/>
        <dbReference type="ChEBI" id="CHEBI:57945"/>
        <dbReference type="EC" id="1.1.1.23"/>
    </reaction>
</comment>
<comment type="cofactor">
    <cofactor evidence="1">
        <name>Zn(2+)</name>
        <dbReference type="ChEBI" id="CHEBI:29105"/>
    </cofactor>
    <text evidence="1">Binds 1 zinc ion per subunit.</text>
</comment>
<comment type="pathway">
    <text evidence="1">Amino-acid biosynthesis; L-histidine biosynthesis; L-histidine from 5-phospho-alpha-D-ribose 1-diphosphate: step 9/9.</text>
</comment>
<comment type="similarity">
    <text evidence="1">Belongs to the histidinol dehydrogenase family.</text>
</comment>
<accession>P60859</accession>
<organism>
    <name type="scientific">Geobacter sulfurreducens (strain ATCC 51573 / DSM 12127 / PCA)</name>
    <dbReference type="NCBI Taxonomy" id="243231"/>
    <lineage>
        <taxon>Bacteria</taxon>
        <taxon>Pseudomonadati</taxon>
        <taxon>Thermodesulfobacteriota</taxon>
        <taxon>Desulfuromonadia</taxon>
        <taxon>Geobacterales</taxon>
        <taxon>Geobacteraceae</taxon>
        <taxon>Geobacter</taxon>
    </lineage>
</organism>
<proteinExistence type="inferred from homology"/>
<gene>
    <name evidence="1" type="primary">hisD</name>
    <name type="ordered locus">GSU3100</name>
</gene>